<dbReference type="EMBL" id="M35027">
    <property type="protein sequence ID" value="AAA48207.1"/>
    <property type="molecule type" value="Genomic_DNA"/>
</dbReference>
<dbReference type="PIR" id="JQ1804">
    <property type="entry name" value="JQ1804"/>
</dbReference>
<dbReference type="SMR" id="P68687"/>
<dbReference type="Proteomes" id="UP000008269">
    <property type="component" value="Segment"/>
</dbReference>
<dbReference type="Gene3D" id="2.120.10.80">
    <property type="entry name" value="Kelch-type beta propeller"/>
    <property type="match status" value="1"/>
</dbReference>
<dbReference type="InterPro" id="IPR015915">
    <property type="entry name" value="Kelch-typ_b-propeller"/>
</dbReference>
<dbReference type="PANTHER" id="PTHR24412:SF163">
    <property type="entry name" value="CALICIN"/>
    <property type="match status" value="1"/>
</dbReference>
<dbReference type="PANTHER" id="PTHR24412">
    <property type="entry name" value="KELCH PROTEIN"/>
    <property type="match status" value="1"/>
</dbReference>
<dbReference type="SUPFAM" id="SSF117281">
    <property type="entry name" value="Kelch motif"/>
    <property type="match status" value="1"/>
</dbReference>
<keyword id="KW-0880">Kelch repeat</keyword>
<keyword id="KW-1185">Reference proteome</keyword>
<keyword id="KW-0677">Repeat</keyword>
<proteinExistence type="inferred from homology"/>
<protein>
    <recommendedName>
        <fullName>Kelch repeat protein B10</fullName>
    </recommendedName>
</protein>
<sequence>MDSGIYETPINYKKSNVSAVSVNNTIFVTGGLFINNSNSTIVVNNMEKLDIYKDKQWSIIEMPMARVYHGIDSTFGMLYFAGGLSVTEQYGNLEKNNEISCYNPRTNKWFDISYTIYKISISSLCKLNNVFYVFSKDIGYVEKYDGAWKLVHDRLPAIKALSTSPY</sequence>
<gene>
    <name type="ORF">B10R</name>
</gene>
<accession>P68687</accession>
<accession>P21006</accession>
<name>VB10_VACCC</name>
<feature type="chain" id="PRO_0000119153" description="Kelch repeat protein B10">
    <location>
        <begin position="1"/>
        <end position="166"/>
    </location>
</feature>
<feature type="repeat" description="Kelch 1">
    <location>
        <begin position="25"/>
        <end position="76"/>
    </location>
</feature>
<feature type="repeat" description="Kelch 2">
    <location>
        <begin position="77"/>
        <end position="129"/>
    </location>
</feature>
<evidence type="ECO:0000305" key="1"/>
<organismHost>
    <name type="scientific">Homo sapiens</name>
    <name type="common">Human</name>
    <dbReference type="NCBI Taxonomy" id="9606"/>
</organismHost>
<reference key="1">
    <citation type="journal article" date="1990" name="Virology">
        <title>The complete DNA sequence of vaccinia virus.</title>
        <authorList>
            <person name="Goebel S.J."/>
            <person name="Johnson G.P."/>
            <person name="Perkus M.E."/>
            <person name="Davis S.W."/>
            <person name="Winslow J.P."/>
            <person name="Paoletti E."/>
        </authorList>
    </citation>
    <scope>NUCLEOTIDE SEQUENCE [LARGE SCALE GENOMIC DNA]</scope>
</reference>
<reference key="2">
    <citation type="journal article" date="1990" name="Virology">
        <title>Appendix to 'The complete DNA sequence of vaccinia virus'.</title>
        <authorList>
            <person name="Goebel S.J."/>
            <person name="Johnson G.P."/>
            <person name="Perkus M.E."/>
            <person name="Davis S.W."/>
            <person name="Winslow J.P."/>
            <person name="Paoletti E."/>
        </authorList>
    </citation>
    <scope>COMPLETE GENOME</scope>
</reference>
<organism>
    <name type="scientific">Vaccinia virus (strain Copenhagen)</name>
    <name type="common">VACV</name>
    <dbReference type="NCBI Taxonomy" id="10249"/>
    <lineage>
        <taxon>Viruses</taxon>
        <taxon>Varidnaviria</taxon>
        <taxon>Bamfordvirae</taxon>
        <taxon>Nucleocytoviricota</taxon>
        <taxon>Pokkesviricetes</taxon>
        <taxon>Chitovirales</taxon>
        <taxon>Poxviridae</taxon>
        <taxon>Chordopoxvirinae</taxon>
        <taxon>Orthopoxvirus</taxon>
        <taxon>Vaccinia virus</taxon>
    </lineage>
</organism>
<comment type="similarity">
    <text evidence="1">Belongs to the poxviruses Kelch family.</text>
</comment>